<proteinExistence type="evidence at transcript level"/>
<gene>
    <name evidence="1" type="primary">32</name>
    <name type="synonym">ssb</name>
    <name evidence="3" type="ORF">EcT2_00246</name>
</gene>
<dbReference type="EMBL" id="X12460">
    <property type="protein sequence ID" value="CAA31000.1"/>
    <property type="molecule type" value="mRNA"/>
</dbReference>
<dbReference type="EMBL" id="X12460">
    <property type="protein sequence ID" value="CAA31001.1"/>
    <property type="status" value="ALT_SEQ"/>
    <property type="molecule type" value="mRNA"/>
</dbReference>
<dbReference type="EMBL" id="AY310907">
    <property type="protein sequence ID" value="AAP78913.1"/>
    <property type="molecule type" value="Genomic_DNA"/>
</dbReference>
<dbReference type="EMBL" id="AP018813">
    <property type="protein sequence ID" value="BBF63397.1"/>
    <property type="molecule type" value="Genomic_DNA"/>
</dbReference>
<dbReference type="PIR" id="S01437">
    <property type="entry name" value="DDBP32"/>
</dbReference>
<dbReference type="RefSeq" id="YP_010073889.1">
    <property type="nucleotide sequence ID" value="NC_054931.1"/>
</dbReference>
<dbReference type="SMR" id="P09035"/>
<dbReference type="GeneID" id="65062612"/>
<dbReference type="Proteomes" id="UP000503557">
    <property type="component" value="Segment"/>
</dbReference>
<dbReference type="GO" id="GO:0046872">
    <property type="term" value="F:metal ion binding"/>
    <property type="evidence" value="ECO:0007669"/>
    <property type="project" value="UniProtKB-UniRule"/>
</dbReference>
<dbReference type="GO" id="GO:0003697">
    <property type="term" value="F:single-stranded DNA binding"/>
    <property type="evidence" value="ECO:0007669"/>
    <property type="project" value="UniProtKB-UniRule"/>
</dbReference>
<dbReference type="GO" id="GO:0039686">
    <property type="term" value="P:bidirectional double-stranded viral DNA replication"/>
    <property type="evidence" value="ECO:0007669"/>
    <property type="project" value="UniProtKB-UniRule"/>
</dbReference>
<dbReference type="GO" id="GO:0006310">
    <property type="term" value="P:DNA recombination"/>
    <property type="evidence" value="ECO:0007669"/>
    <property type="project" value="UniProtKB-UniRule"/>
</dbReference>
<dbReference type="GO" id="GO:0006281">
    <property type="term" value="P:DNA repair"/>
    <property type="evidence" value="ECO:0007669"/>
    <property type="project" value="UniProtKB-UniRule"/>
</dbReference>
<dbReference type="GO" id="GO:0006260">
    <property type="term" value="P:DNA replication"/>
    <property type="evidence" value="ECO:0007669"/>
    <property type="project" value="UniProtKB-KW"/>
</dbReference>
<dbReference type="FunFam" id="3.90.198.10:FF:000001">
    <property type="entry name" value="Single-stranded DNA binding protein"/>
    <property type="match status" value="1"/>
</dbReference>
<dbReference type="Gene3D" id="3.90.198.10">
    <property type="entry name" value="Replication Fork Single-Stranded Dna Binding Protein"/>
    <property type="match status" value="1"/>
</dbReference>
<dbReference type="HAMAP" id="MF_04152">
    <property type="entry name" value="SSB_T4"/>
    <property type="match status" value="1"/>
</dbReference>
<dbReference type="InterPro" id="IPR012340">
    <property type="entry name" value="NA-bd_OB-fold"/>
</dbReference>
<dbReference type="InterPro" id="IPR012339">
    <property type="entry name" value="Phage_T4_Gp32_ssDNA-bd"/>
</dbReference>
<dbReference type="InterPro" id="IPR044947">
    <property type="entry name" value="Phage_T4_Gp32_ssDNA-bd_sf"/>
</dbReference>
<dbReference type="InterPro" id="IPR046395">
    <property type="entry name" value="SSB_T4"/>
</dbReference>
<dbReference type="Pfam" id="PF08804">
    <property type="entry name" value="gp32"/>
    <property type="match status" value="1"/>
</dbReference>
<dbReference type="SUPFAM" id="SSF50249">
    <property type="entry name" value="Nucleic acid-binding proteins"/>
    <property type="match status" value="1"/>
</dbReference>
<feature type="chain" id="PRO_0000165048" description="Single-stranded DNA-binding protein">
    <location>
        <begin position="1"/>
        <end position="302"/>
    </location>
</feature>
<feature type="region of interest" description="LAST" evidence="1">
    <location>
        <begin position="3"/>
        <end position="7"/>
    </location>
</feature>
<feature type="region of interest" description="Disordered" evidence="2">
    <location>
        <begin position="273"/>
        <end position="302"/>
    </location>
</feature>
<feature type="compositionally biased region" description="Low complexity" evidence="2">
    <location>
        <begin position="280"/>
        <end position="290"/>
    </location>
</feature>
<feature type="compositionally biased region" description="Acidic residues" evidence="2">
    <location>
        <begin position="291"/>
        <end position="302"/>
    </location>
</feature>
<feature type="binding site" evidence="1">
    <location>
        <position position="65"/>
    </location>
    <ligand>
        <name>Zn(2+)</name>
        <dbReference type="ChEBI" id="CHEBI:29105"/>
    </ligand>
</feature>
<feature type="binding site" evidence="1">
    <location>
        <position position="78"/>
    </location>
    <ligand>
        <name>Zn(2+)</name>
        <dbReference type="ChEBI" id="CHEBI:29105"/>
    </ligand>
</feature>
<feature type="binding site" evidence="1">
    <location>
        <position position="88"/>
    </location>
    <ligand>
        <name>Zn(2+)</name>
        <dbReference type="ChEBI" id="CHEBI:29105"/>
    </ligand>
</feature>
<feature type="binding site" evidence="1">
    <location>
        <position position="91"/>
    </location>
    <ligand>
        <name>Zn(2+)</name>
        <dbReference type="ChEBI" id="CHEBI:29105"/>
    </ligand>
</feature>
<protein>
    <recommendedName>
        <fullName evidence="1">Single-stranded DNA-binding protein</fullName>
        <shortName evidence="1">SSB protein</shortName>
    </recommendedName>
    <alternativeName>
        <fullName evidence="1">Gp32</fullName>
    </alternativeName>
    <alternativeName>
        <fullName evidence="1">Helix-destabilizing protein</fullName>
    </alternativeName>
</protein>
<organismHost>
    <name type="scientific">Escherichia coli</name>
    <dbReference type="NCBI Taxonomy" id="562"/>
</organismHost>
<sequence>MFKRKSTAELAAQMAKLAGNKGGFSSEDKGEWKLKLDNAGNGQAVIRFLPSKNDEQAPFAILVNHGFKKNGKWYIENCSSTHGDYDSCPVCQYISKNDLYNTDNKEYGLVKRKTSYWANILVVKDPAAPENEGKVFKYRFGKKIWDKINAMIAVDVEMGETPVDVTCPWEGANFVLKVKQVSGFSNYDESKFLNQSAIPNIDDESFQKELFEQMVDLSEMTSKDKFKSFEELSTKFSQVMGTAAMGGAAATAAKKADKVADDLDAFNVDDFNTKTEDDFMSSSSGSSSSADDTDLDDLLNDL</sequence>
<comment type="function">
    <text evidence="1">Single-stranded DNA-binding protein that participates in viral DNA replication, recombination, and repair. Coats the lagging-strand ssDNA as the replication fork advances. Stimulates the activities of viral DNA polymerase and DnaB-like SF4 replicative helicase, probably via its interaction with the helicase assembly factor. Together with DnaB-like SF4 replicative helicase and the helicase assembly factor, promotes pairing of two homologous DNA molecules containing complementary single-stranded regions and mediates homologous DNA strand exchange. Also promotes the formation of joint molecules. mRNA specific autogenous translational repressor.</text>
</comment>
<comment type="subunit">
    <text evidence="1">Homodimer in the absence of DNA, monomer when binding DNA. Interacts with the DNA helicase assembly protein; a ternary complex between the helicase assembly protein, the single-stranded DNA-binding protein and ssDNA is an obligatory intermediate in the helicase loading mechanism. Part of the replicase complex that includes the DNA polymerase, the polymerase clamp, the clamp loader complex, the single-stranded DNA binding protein, the primase, the DnaB-like SF4 replicative helicase and the helicase assembly factor. Interacts (via C-terminus) with the viral SF1 dDA helicase. Interacts with the viral SF2 UvsW repair helicase.</text>
</comment>
<comment type="domain">
    <text evidence="1">The acidic C-terminus is involved in modulating the ssDNA binding properties. The N-terminus LAST motif is involved in the cooperative binding of the protein to ssDNA.</text>
</comment>
<comment type="similarity">
    <text evidence="1">Belongs to the Tequatrovirus single-stranded DNA-binding protein family.</text>
</comment>
<keyword id="KW-0227">DNA damage</keyword>
<keyword id="KW-0234">DNA repair</keyword>
<keyword id="KW-0235">DNA replication</keyword>
<keyword id="KW-0238">DNA-binding</keyword>
<keyword id="KW-0479">Metal-binding</keyword>
<keyword id="KW-0678">Repressor</keyword>
<keyword id="KW-1194">Viral DNA replication</keyword>
<keyword id="KW-0862">Zinc</keyword>
<organism>
    <name type="scientific">Enterobacteria phage T2</name>
    <name type="common">Bacteriophage T2</name>
    <dbReference type="NCBI Taxonomy" id="2060721"/>
    <lineage>
        <taxon>Viruses</taxon>
        <taxon>Duplodnaviria</taxon>
        <taxon>Heunggongvirae</taxon>
        <taxon>Uroviricota</taxon>
        <taxon>Caudoviricetes</taxon>
        <taxon>Straboviridae</taxon>
        <taxon>Tevenvirinae</taxon>
        <taxon>Tequatrovirus</taxon>
        <taxon>Tequatrovirus T2</taxon>
    </lineage>
</organism>
<reference key="1">
    <citation type="journal article" date="1988" name="Nucleic Acids Res.">
        <title>Nucleotide sequences of the bacteriophage T2 and T6 gene 32 mRNAs.</title>
        <authorList>
            <person name="McPheeters D.S."/>
            <person name="Stormo G.D."/>
            <person name="Gosch G."/>
            <person name="Gold L."/>
        </authorList>
    </citation>
    <scope>NUCLEOTIDE SEQUENCE [MRNA]</scope>
</reference>
<reference key="2">
    <citation type="journal article" date="2003" name="J. Mol. Biol.">
        <title>SegG endonuclease promotes marker exclusion and mediates co-conversion from a distant cleavage site.</title>
        <authorList>
            <person name="Liu Q."/>
            <person name="Belle A."/>
            <person name="Shub D.A."/>
            <person name="Belfort M."/>
            <person name="Edgell D.R."/>
        </authorList>
    </citation>
    <scope>NUCLEOTIDE SEQUENCE</scope>
    <source>
        <strain>T2L</strain>
    </source>
</reference>
<reference key="3">
    <citation type="submission" date="2018-07" db="EMBL/GenBank/DDBJ databases">
        <title>Complete genome sequence of bacteriophage T2.</title>
        <authorList>
            <person name="Akiyama T."/>
            <person name="Ando H."/>
            <person name="Kitao T."/>
            <person name="Shimada K."/>
        </authorList>
    </citation>
    <scope>NUCLEOTIDE SEQUENCE [LARGE SCALE GENOMIC DNA]</scope>
</reference>
<evidence type="ECO:0000255" key="1">
    <source>
        <dbReference type="HAMAP-Rule" id="MF_04152"/>
    </source>
</evidence>
<evidence type="ECO:0000256" key="2">
    <source>
        <dbReference type="SAM" id="MobiDB-lite"/>
    </source>
</evidence>
<evidence type="ECO:0000312" key="3">
    <source>
        <dbReference type="EMBL" id="BBF63397.1"/>
    </source>
</evidence>
<name>SSB_BPT2</name>
<accession>P09035</accession>
<accession>Q7Y4N4</accession>